<reference key="1">
    <citation type="journal article" date="2002" name="Nature">
        <title>The genome sequence of Schizosaccharomyces pombe.</title>
        <authorList>
            <person name="Wood V."/>
            <person name="Gwilliam R."/>
            <person name="Rajandream M.A."/>
            <person name="Lyne M.H."/>
            <person name="Lyne R."/>
            <person name="Stewart A."/>
            <person name="Sgouros J.G."/>
            <person name="Peat N."/>
            <person name="Hayles J."/>
            <person name="Baker S.G."/>
            <person name="Basham D."/>
            <person name="Bowman S."/>
            <person name="Brooks K."/>
            <person name="Brown D."/>
            <person name="Brown S."/>
            <person name="Chillingworth T."/>
            <person name="Churcher C.M."/>
            <person name="Collins M."/>
            <person name="Connor R."/>
            <person name="Cronin A."/>
            <person name="Davis P."/>
            <person name="Feltwell T."/>
            <person name="Fraser A."/>
            <person name="Gentles S."/>
            <person name="Goble A."/>
            <person name="Hamlin N."/>
            <person name="Harris D.E."/>
            <person name="Hidalgo J."/>
            <person name="Hodgson G."/>
            <person name="Holroyd S."/>
            <person name="Hornsby T."/>
            <person name="Howarth S."/>
            <person name="Huckle E.J."/>
            <person name="Hunt S."/>
            <person name="Jagels K."/>
            <person name="James K.D."/>
            <person name="Jones L."/>
            <person name="Jones M."/>
            <person name="Leather S."/>
            <person name="McDonald S."/>
            <person name="McLean J."/>
            <person name="Mooney P."/>
            <person name="Moule S."/>
            <person name="Mungall K.L."/>
            <person name="Murphy L.D."/>
            <person name="Niblett D."/>
            <person name="Odell C."/>
            <person name="Oliver K."/>
            <person name="O'Neil S."/>
            <person name="Pearson D."/>
            <person name="Quail M.A."/>
            <person name="Rabbinowitsch E."/>
            <person name="Rutherford K.M."/>
            <person name="Rutter S."/>
            <person name="Saunders D."/>
            <person name="Seeger K."/>
            <person name="Sharp S."/>
            <person name="Skelton J."/>
            <person name="Simmonds M.N."/>
            <person name="Squares R."/>
            <person name="Squares S."/>
            <person name="Stevens K."/>
            <person name="Taylor K."/>
            <person name="Taylor R.G."/>
            <person name="Tivey A."/>
            <person name="Walsh S.V."/>
            <person name="Warren T."/>
            <person name="Whitehead S."/>
            <person name="Woodward J.R."/>
            <person name="Volckaert G."/>
            <person name="Aert R."/>
            <person name="Robben J."/>
            <person name="Grymonprez B."/>
            <person name="Weltjens I."/>
            <person name="Vanstreels E."/>
            <person name="Rieger M."/>
            <person name="Schaefer M."/>
            <person name="Mueller-Auer S."/>
            <person name="Gabel C."/>
            <person name="Fuchs M."/>
            <person name="Duesterhoeft A."/>
            <person name="Fritzc C."/>
            <person name="Holzer E."/>
            <person name="Moestl D."/>
            <person name="Hilbert H."/>
            <person name="Borzym K."/>
            <person name="Langer I."/>
            <person name="Beck A."/>
            <person name="Lehrach H."/>
            <person name="Reinhardt R."/>
            <person name="Pohl T.M."/>
            <person name="Eger P."/>
            <person name="Zimmermann W."/>
            <person name="Wedler H."/>
            <person name="Wambutt R."/>
            <person name="Purnelle B."/>
            <person name="Goffeau A."/>
            <person name="Cadieu E."/>
            <person name="Dreano S."/>
            <person name="Gloux S."/>
            <person name="Lelaure V."/>
            <person name="Mottier S."/>
            <person name="Galibert F."/>
            <person name="Aves S.J."/>
            <person name="Xiang Z."/>
            <person name="Hunt C."/>
            <person name="Moore K."/>
            <person name="Hurst S.M."/>
            <person name="Lucas M."/>
            <person name="Rochet M."/>
            <person name="Gaillardin C."/>
            <person name="Tallada V.A."/>
            <person name="Garzon A."/>
            <person name="Thode G."/>
            <person name="Daga R.R."/>
            <person name="Cruzado L."/>
            <person name="Jimenez J."/>
            <person name="Sanchez M."/>
            <person name="del Rey F."/>
            <person name="Benito J."/>
            <person name="Dominguez A."/>
            <person name="Revuelta J.L."/>
            <person name="Moreno S."/>
            <person name="Armstrong J."/>
            <person name="Forsburg S.L."/>
            <person name="Cerutti L."/>
            <person name="Lowe T."/>
            <person name="McCombie W.R."/>
            <person name="Paulsen I."/>
            <person name="Potashkin J."/>
            <person name="Shpakovski G.V."/>
            <person name="Ussery D."/>
            <person name="Barrell B.G."/>
            <person name="Nurse P."/>
        </authorList>
    </citation>
    <scope>NUCLEOTIDE SEQUENCE [LARGE SCALE GENOMIC DNA]</scope>
    <source>
        <strain>972 / ATCC 24843</strain>
    </source>
</reference>
<reference key="2">
    <citation type="journal article" date="2006" name="Eukaryot. Cell">
        <title>Sequential processing of a mitochondrial tandem protein: insights into protein import in Schizosaccharomyces pombe.</title>
        <authorList>
            <person name="Khalimonchuk O."/>
            <person name="Ott M."/>
            <person name="Funes S."/>
            <person name="Ostermann K."/>
            <person name="Roedel G."/>
            <person name="Herrmann J.M."/>
        </authorList>
    </citation>
    <scope>PROTEOLYTIC CLEAVAGE</scope>
    <scope>SUBCELLULAR LOCATION</scope>
</reference>
<accession>Q86ZU7</accession>
<gene>
    <name type="primary">cox1102</name>
    <name type="synonym">cox11</name>
    <name type="synonym">cox11-b</name>
    <name type="ORF">SPAC19B12.13</name>
    <name type="ORF">SPAPB8E5.01</name>
</gene>
<name>CO112_SCHPO</name>
<organism>
    <name type="scientific">Schizosaccharomyces pombe (strain 972 / ATCC 24843)</name>
    <name type="common">Fission yeast</name>
    <dbReference type="NCBI Taxonomy" id="284812"/>
    <lineage>
        <taxon>Eukaryota</taxon>
        <taxon>Fungi</taxon>
        <taxon>Dikarya</taxon>
        <taxon>Ascomycota</taxon>
        <taxon>Taphrinomycotina</taxon>
        <taxon>Schizosaccharomycetes</taxon>
        <taxon>Schizosaccharomycetales</taxon>
        <taxon>Schizosaccharomycetaceae</taxon>
        <taxon>Schizosaccharomyces</taxon>
    </lineage>
</organism>
<dbReference type="EMBL" id="CU329670">
    <property type="protein sequence ID" value="CAD89537.2"/>
    <property type="molecule type" value="Genomic_DNA"/>
</dbReference>
<dbReference type="RefSeq" id="XP_001713114.1">
    <property type="nucleotide sequence ID" value="XM_001713062.2"/>
</dbReference>
<dbReference type="SMR" id="Q86ZU7"/>
<dbReference type="FunCoup" id="Q86ZU7">
    <property type="interactions" value="67"/>
</dbReference>
<dbReference type="STRING" id="284812.Q86ZU7"/>
<dbReference type="iPTMnet" id="Q86ZU7"/>
<dbReference type="PaxDb" id="4896-SPAC19B12.13.1"/>
<dbReference type="EnsemblFungi" id="SPAC19B12.13.1">
    <property type="protein sequence ID" value="SPAC19B12.13.1:pep"/>
    <property type="gene ID" value="SPAC19B12.13"/>
</dbReference>
<dbReference type="PomBase" id="SPAC19B12.13">
    <property type="gene designation" value="cox1102"/>
</dbReference>
<dbReference type="VEuPathDB" id="FungiDB:SPAC19B12.13"/>
<dbReference type="eggNOG" id="KOG2539">
    <property type="taxonomic scope" value="Eukaryota"/>
</dbReference>
<dbReference type="eggNOG" id="KOG2540">
    <property type="taxonomic scope" value="Eukaryota"/>
</dbReference>
<dbReference type="HOGENOM" id="CLU_425883_0_0_1"/>
<dbReference type="InParanoid" id="Q86ZU7"/>
<dbReference type="PhylomeDB" id="Q86ZU7"/>
<dbReference type="PRO" id="PR:Q86ZU7"/>
<dbReference type="Proteomes" id="UP000002485">
    <property type="component" value="Chromosome I"/>
</dbReference>
<dbReference type="GO" id="GO:0005743">
    <property type="term" value="C:mitochondrial inner membrane"/>
    <property type="evidence" value="ECO:0000318"/>
    <property type="project" value="GO_Central"/>
</dbReference>
<dbReference type="GO" id="GO:0005759">
    <property type="term" value="C:mitochondrial matrix"/>
    <property type="evidence" value="ECO:0000250"/>
    <property type="project" value="PomBase"/>
</dbReference>
<dbReference type="GO" id="GO:0005507">
    <property type="term" value="F:copper ion binding"/>
    <property type="evidence" value="ECO:0000266"/>
    <property type="project" value="PomBase"/>
</dbReference>
<dbReference type="GO" id="GO:0051536">
    <property type="term" value="F:iron-sulfur cluster binding"/>
    <property type="evidence" value="ECO:0007669"/>
    <property type="project" value="UniProtKB-KW"/>
</dbReference>
<dbReference type="GO" id="GO:0008168">
    <property type="term" value="F:methyltransferase activity"/>
    <property type="evidence" value="ECO:0000255"/>
    <property type="project" value="PomBase"/>
</dbReference>
<dbReference type="GO" id="GO:0033617">
    <property type="term" value="P:mitochondrial cytochrome c oxidase assembly"/>
    <property type="evidence" value="ECO:0000266"/>
    <property type="project" value="PomBase"/>
</dbReference>
<dbReference type="GO" id="GO:0032543">
    <property type="term" value="P:mitochondrial translation"/>
    <property type="evidence" value="ECO:0000303"/>
    <property type="project" value="PomBase"/>
</dbReference>
<dbReference type="FunFam" id="2.60.370.10:FF:000001">
    <property type="entry name" value="COX11 cytochrome c oxidase assembly homolog"/>
    <property type="match status" value="1"/>
</dbReference>
<dbReference type="Gene3D" id="2.60.370.10">
    <property type="entry name" value="Ctag/Cox11"/>
    <property type="match status" value="1"/>
</dbReference>
<dbReference type="HAMAP" id="MF_00155">
    <property type="entry name" value="CtaG"/>
    <property type="match status" value="1"/>
</dbReference>
<dbReference type="InterPro" id="IPR023471">
    <property type="entry name" value="CtaG/Cox11_dom_sf"/>
</dbReference>
<dbReference type="InterPro" id="IPR007533">
    <property type="entry name" value="Cyt_c_oxidase_assmbl_CtaG"/>
</dbReference>
<dbReference type="InterPro" id="IPR015324">
    <property type="entry name" value="Ribosomal_Rsm22-like"/>
</dbReference>
<dbReference type="NCBIfam" id="NF003465">
    <property type="entry name" value="PRK05089.1"/>
    <property type="match status" value="1"/>
</dbReference>
<dbReference type="PANTHER" id="PTHR21320:SF3">
    <property type="entry name" value="CYTOCHROME C OXIDASE ASSEMBLY PROTEIN COX11, MITOCHONDRIAL-RELATED"/>
    <property type="match status" value="1"/>
</dbReference>
<dbReference type="PANTHER" id="PTHR21320">
    <property type="entry name" value="CYTOCHROME C OXIDASE ASSEMBLY PROTEIN COX11-RELATED"/>
    <property type="match status" value="1"/>
</dbReference>
<dbReference type="Pfam" id="PF04442">
    <property type="entry name" value="CtaG_Cox11"/>
    <property type="match status" value="1"/>
</dbReference>
<dbReference type="Pfam" id="PF09243">
    <property type="entry name" value="Rsm22"/>
    <property type="match status" value="1"/>
</dbReference>
<dbReference type="SUPFAM" id="SSF110111">
    <property type="entry name" value="Ctag/Cox11"/>
    <property type="match status" value="1"/>
</dbReference>
<protein>
    <recommendedName>
        <fullName>Rsm22-cox11 tandem protein 2, mitochondrial</fullName>
    </recommendedName>
    <component>
        <recommendedName>
            <fullName>Ribosome assembly protein Rsm22-2</fullName>
        </recommendedName>
    </component>
    <component>
        <recommendedName>
            <fullName>Cytochrome c oxidase assembly protein cox11-2</fullName>
        </recommendedName>
    </component>
</protein>
<comment type="function">
    <molecule>Ribosome assembly protein Rsm22-2</molecule>
    <text evidence="3 4">Mitochondrial ribosome (mitoribosome) assembly factor. Binds at the interface of the head and body domains of the mitochondrial small ribosomal subunit (mt-SSU), occluding the mRNA channel and preventing compaction of the head domain towards the body (By similarity). Probable inactive methyltransferase: retains the characteristic folding and ability to bind S-adenosyl-L-methionine, but it probably lost its methyltransferase activity (By similarity).</text>
</comment>
<comment type="function">
    <molecule>Cytochrome c oxidase assembly protein cox11-2</molecule>
    <text evidence="1">Exerts its effect at some terminal stage of cytochrome c oxidase synthesis, probably by being involved in the insertion of the copper B into subunit I.</text>
</comment>
<comment type="subunit">
    <molecule>Ribosome assembly protein Rsm22-2</molecule>
    <text evidence="3">Associates with the mitochondrial ribosome (mitoribosome). Only transiently interacts with the mitoribosome.</text>
</comment>
<comment type="subcellular location">
    <molecule>Ribosome assembly protein Rsm22-2</molecule>
    <subcellularLocation>
        <location evidence="3">Mitochondrion</location>
    </subcellularLocation>
</comment>
<comment type="subcellular location">
    <molecule>Cytochrome c oxidase assembly protein cox11-2</molecule>
    <subcellularLocation>
        <location evidence="2">Mitochondrion inner membrane</location>
        <topology evidence="2">Single-pass membrane protein</topology>
        <orientation evidence="2">Intermembrane side</orientation>
    </subcellularLocation>
    <text evidence="2">Intrinsic component of the inner-membrane.</text>
</comment>
<comment type="PTM">
    <text evidence="6">Specific enzymatic cleavages in vivo by mitochondrial processing peptidase (MPP) yield mature proteins including rsm22-2 and cox11-2.</text>
</comment>
<comment type="similarity">
    <text evidence="7">In the N-terminal section; belongs to the methyltransferase superfamily. Rsm22 family.</text>
</comment>
<comment type="similarity">
    <text evidence="7">In the C-terminal section; belongs to the COX11/CtaG family.</text>
</comment>
<sequence length="753" mass="86111">MPILTCRYKILFLYNLRNCFTFQNQRCLIPYGTTTTIRWYNANFQAVQNNFSDYKNELISSHRPEASSLLDFLVKDQKKSGDISLHTKFNLYVDDLLKKSEKGQIKKFINDIKKDLATESQLPLSAPFKDESTRTMTDPQVLAYIHQSMPYQYASLYSVLTDLKIVNSDVSCKSQHILDCGKGPGIGALASYSVFPTPNSVSIVEENPFLKKIIYDIHHNIYPSTSPNPTSPVTLNRLPLGKKDSYTLVIASNKLLEMKSEKELFDYLRSLWSLVSNDGGLLVLCERGTKRGFSLIQRARTFLLQKSKNTSDKQFNAHIVAPCPHDGRCPIDIENGVRANICSFKQHFFLSPFSRLYVPRSHRRSSDRSHYSYVVIQKGITRPLNNTTQRFKNDEDLLENVNVTSPTLKNWPRIIRPPLKRDGHVIIDVCDSDARLRRNIVPKSQGKLAYRLARKSAWGDLFPLEGKVQSTSPSSKITKHLKDASSTYSINPPSYNKPKVERNTTADPIFVGKRFYSTNRHKAFSRFADFNSHRFPCIFTSFSCYNCISGTRNISRQYSRDKFHYNQRTTIYYLVAISIFALGLTYAAVPLYRLFCSKTGYGGTLNTDQSRMNAERMVPRKDNKRIRVTFNGDVAGNLSWKLWPQQREIYVLPGETALGFYTAENTSDHDIVGVATYNIVPGQAAVYFSKVACFCFEEQKLDAHEKVDLPVFFFIDPEFADDPNMKDIDDILLSYTFFEARYDTNGNLLTKLN</sequence>
<keyword id="KW-0408">Iron</keyword>
<keyword id="KW-0411">Iron-sulfur</keyword>
<keyword id="KW-0472">Membrane</keyword>
<keyword id="KW-0479">Metal-binding</keyword>
<keyword id="KW-0496">Mitochondrion</keyword>
<keyword id="KW-0999">Mitochondrion inner membrane</keyword>
<keyword id="KW-1185">Reference proteome</keyword>
<keyword id="KW-0809">Transit peptide</keyword>
<keyword id="KW-0812">Transmembrane</keyword>
<keyword id="KW-1133">Transmembrane helix</keyword>
<evidence type="ECO:0000250" key="1"/>
<evidence type="ECO:0000250" key="2">
    <source>
        <dbReference type="UniProtKB" id="P19516"/>
    </source>
</evidence>
<evidence type="ECO:0000250" key="3">
    <source>
        <dbReference type="UniProtKB" id="P36056"/>
    </source>
</evidence>
<evidence type="ECO:0000250" key="4">
    <source>
        <dbReference type="UniProtKB" id="Q9H7H0"/>
    </source>
</evidence>
<evidence type="ECO:0000255" key="5"/>
<evidence type="ECO:0000269" key="6">
    <source>
    </source>
</evidence>
<evidence type="ECO:0000305" key="7"/>
<proteinExistence type="evidence at protein level"/>
<feature type="transit peptide" description="Mitochondrion" evidence="5">
    <location>
        <begin position="1"/>
        <end position="39"/>
    </location>
</feature>
<feature type="chain" id="PRO_0000352839" description="Rsm22-cox11 tandem protein 2, mitochondrial">
    <location>
        <begin position="40"/>
        <end position="753"/>
    </location>
</feature>
<feature type="chain" id="PRO_0000352840" description="Ribosome assembly protein Rsm22-2">
    <location>
        <begin position="40"/>
        <end position="568"/>
    </location>
</feature>
<feature type="chain" id="PRO_0000352841" description="Cytochrome c oxidase assembly protein cox11-2">
    <location>
        <begin position="569"/>
        <end position="753"/>
    </location>
</feature>
<feature type="transmembrane region" description="Helical" evidence="5">
    <location>
        <begin position="571"/>
        <end position="591"/>
    </location>
</feature>
<feature type="topological domain" description="Mitochondrial intermembrane" evidence="1">
    <location>
        <begin position="592"/>
        <end position="753"/>
    </location>
</feature>
<feature type="binding site" evidence="4">
    <location>
        <position position="323"/>
    </location>
    <ligand>
        <name>[4Fe-4S] cluster</name>
        <dbReference type="ChEBI" id="CHEBI:49883"/>
    </ligand>
</feature>
<feature type="binding site" evidence="4">
    <location>
        <position position="329"/>
    </location>
    <ligand>
        <name>[4Fe-4S] cluster</name>
        <dbReference type="ChEBI" id="CHEBI:49883"/>
    </ligand>
</feature>
<feature type="binding site" evidence="4">
    <location>
        <position position="342"/>
    </location>
    <ligand>
        <name>[4Fe-4S] cluster</name>
        <dbReference type="ChEBI" id="CHEBI:49883"/>
    </ligand>
</feature>
<feature type="binding site" evidence="4">
    <location>
        <position position="430"/>
    </location>
    <ligand>
        <name>[4Fe-4S] cluster</name>
        <dbReference type="ChEBI" id="CHEBI:49883"/>
    </ligand>
</feature>
<feature type="site" description="Cleavage; by mitochondrial processing peptidase">
    <location>
        <begin position="568"/>
        <end position="569"/>
    </location>
</feature>